<dbReference type="EC" id="2.4.2.9" evidence="1"/>
<dbReference type="EMBL" id="CP000804">
    <property type="protein sequence ID" value="ABU58513.1"/>
    <property type="molecule type" value="Genomic_DNA"/>
</dbReference>
<dbReference type="RefSeq" id="WP_012120937.1">
    <property type="nucleotide sequence ID" value="NC_009767.1"/>
</dbReference>
<dbReference type="SMR" id="A7NLW5"/>
<dbReference type="STRING" id="383372.Rcas_2433"/>
<dbReference type="KEGG" id="rca:Rcas_2433"/>
<dbReference type="eggNOG" id="COG2065">
    <property type="taxonomic scope" value="Bacteria"/>
</dbReference>
<dbReference type="HOGENOM" id="CLU_094234_2_1_0"/>
<dbReference type="OrthoDB" id="9802227at2"/>
<dbReference type="Proteomes" id="UP000000263">
    <property type="component" value="Chromosome"/>
</dbReference>
<dbReference type="GO" id="GO:0004845">
    <property type="term" value="F:uracil phosphoribosyltransferase activity"/>
    <property type="evidence" value="ECO:0007669"/>
    <property type="project" value="UniProtKB-UniRule"/>
</dbReference>
<dbReference type="GO" id="GO:0006355">
    <property type="term" value="P:regulation of DNA-templated transcription"/>
    <property type="evidence" value="ECO:0007669"/>
    <property type="project" value="UniProtKB-UniRule"/>
</dbReference>
<dbReference type="CDD" id="cd06223">
    <property type="entry name" value="PRTases_typeI"/>
    <property type="match status" value="1"/>
</dbReference>
<dbReference type="FunFam" id="3.40.50.2020:FF:000020">
    <property type="entry name" value="Bifunctional protein PyrR"/>
    <property type="match status" value="1"/>
</dbReference>
<dbReference type="Gene3D" id="3.40.50.2020">
    <property type="match status" value="1"/>
</dbReference>
<dbReference type="HAMAP" id="MF_01219">
    <property type="entry name" value="PyrR"/>
    <property type="match status" value="1"/>
</dbReference>
<dbReference type="InterPro" id="IPR000836">
    <property type="entry name" value="PRibTrfase_dom"/>
</dbReference>
<dbReference type="InterPro" id="IPR029057">
    <property type="entry name" value="PRTase-like"/>
</dbReference>
<dbReference type="InterPro" id="IPR023050">
    <property type="entry name" value="PyrR"/>
</dbReference>
<dbReference type="InterPro" id="IPR050137">
    <property type="entry name" value="PyrR_bifunctional"/>
</dbReference>
<dbReference type="NCBIfam" id="NF003545">
    <property type="entry name" value="PRK05205.1-1"/>
    <property type="match status" value="1"/>
</dbReference>
<dbReference type="NCBIfam" id="NF003547">
    <property type="entry name" value="PRK05205.1-3"/>
    <property type="match status" value="1"/>
</dbReference>
<dbReference type="NCBIfam" id="NF003548">
    <property type="entry name" value="PRK05205.1-4"/>
    <property type="match status" value="1"/>
</dbReference>
<dbReference type="NCBIfam" id="NF003549">
    <property type="entry name" value="PRK05205.1-5"/>
    <property type="match status" value="1"/>
</dbReference>
<dbReference type="PANTHER" id="PTHR11608">
    <property type="entry name" value="BIFUNCTIONAL PROTEIN PYRR"/>
    <property type="match status" value="1"/>
</dbReference>
<dbReference type="PANTHER" id="PTHR11608:SF0">
    <property type="entry name" value="BIFUNCTIONAL PROTEIN PYRR"/>
    <property type="match status" value="1"/>
</dbReference>
<dbReference type="Pfam" id="PF00156">
    <property type="entry name" value="Pribosyltran"/>
    <property type="match status" value="1"/>
</dbReference>
<dbReference type="SUPFAM" id="SSF53271">
    <property type="entry name" value="PRTase-like"/>
    <property type="match status" value="1"/>
</dbReference>
<sequence>MGEKQILDADDIRRAMTRIAHEIVERNAGVRDVALVGVRRRGVPLALRLAAALEEIEGVRVPVGILDITLYRDDLGIRGPAPVVHATDIPFDINGRTVVLVDDVLYTGRTVRAALDALTDFGRPARIQLAVLIDRGHRELPIRADFVGKNVPTSRDERIATRLHEVDGGVDGVFIVRVSESTTE</sequence>
<reference key="1">
    <citation type="submission" date="2007-08" db="EMBL/GenBank/DDBJ databases">
        <title>Complete sequence of Roseiflexus castenholzii DSM 13941.</title>
        <authorList>
            <consortium name="US DOE Joint Genome Institute"/>
            <person name="Copeland A."/>
            <person name="Lucas S."/>
            <person name="Lapidus A."/>
            <person name="Barry K."/>
            <person name="Glavina del Rio T."/>
            <person name="Dalin E."/>
            <person name="Tice H."/>
            <person name="Pitluck S."/>
            <person name="Thompson L.S."/>
            <person name="Brettin T."/>
            <person name="Bruce D."/>
            <person name="Detter J.C."/>
            <person name="Han C."/>
            <person name="Tapia R."/>
            <person name="Schmutz J."/>
            <person name="Larimer F."/>
            <person name="Land M."/>
            <person name="Hauser L."/>
            <person name="Kyrpides N."/>
            <person name="Mikhailova N."/>
            <person name="Bryant D.A."/>
            <person name="Hanada S."/>
            <person name="Tsukatani Y."/>
            <person name="Richardson P."/>
        </authorList>
    </citation>
    <scope>NUCLEOTIDE SEQUENCE [LARGE SCALE GENOMIC DNA]</scope>
    <source>
        <strain>DSM 13941 / HLO8</strain>
    </source>
</reference>
<accession>A7NLW5</accession>
<evidence type="ECO:0000255" key="1">
    <source>
        <dbReference type="HAMAP-Rule" id="MF_01219"/>
    </source>
</evidence>
<name>PYRR_ROSCS</name>
<comment type="function">
    <text evidence="1">Regulates the transcription of the pyrimidine nucleotide (pyr) operon in response to exogenous pyrimidines.</text>
</comment>
<comment type="function">
    <text evidence="1">Also displays a weak uracil phosphoribosyltransferase activity which is not physiologically significant.</text>
</comment>
<comment type="catalytic activity">
    <reaction evidence="1">
        <text>UMP + diphosphate = 5-phospho-alpha-D-ribose 1-diphosphate + uracil</text>
        <dbReference type="Rhea" id="RHEA:13017"/>
        <dbReference type="ChEBI" id="CHEBI:17568"/>
        <dbReference type="ChEBI" id="CHEBI:33019"/>
        <dbReference type="ChEBI" id="CHEBI:57865"/>
        <dbReference type="ChEBI" id="CHEBI:58017"/>
        <dbReference type="EC" id="2.4.2.9"/>
    </reaction>
</comment>
<comment type="similarity">
    <text evidence="1">Belongs to the purine/pyrimidine phosphoribosyltransferase family. PyrR subfamily.</text>
</comment>
<proteinExistence type="inferred from homology"/>
<feature type="chain" id="PRO_1000085655" description="Bifunctional protein PyrR">
    <location>
        <begin position="1"/>
        <end position="184"/>
    </location>
</feature>
<feature type="short sequence motif" description="PRPP-binding" evidence="1">
    <location>
        <begin position="98"/>
        <end position="110"/>
    </location>
</feature>
<keyword id="KW-0328">Glycosyltransferase</keyword>
<keyword id="KW-1185">Reference proteome</keyword>
<keyword id="KW-0804">Transcription</keyword>
<keyword id="KW-0805">Transcription regulation</keyword>
<keyword id="KW-0808">Transferase</keyword>
<gene>
    <name evidence="1" type="primary">pyrR</name>
    <name type="ordered locus">Rcas_2433</name>
</gene>
<protein>
    <recommendedName>
        <fullName evidence="1">Bifunctional protein PyrR</fullName>
    </recommendedName>
    <domain>
        <recommendedName>
            <fullName evidence="1">Pyrimidine operon regulatory protein</fullName>
        </recommendedName>
    </domain>
    <domain>
        <recommendedName>
            <fullName evidence="1">Uracil phosphoribosyltransferase</fullName>
            <shortName evidence="1">UPRTase</shortName>
            <ecNumber evidence="1">2.4.2.9</ecNumber>
        </recommendedName>
    </domain>
</protein>
<organism>
    <name type="scientific">Roseiflexus castenholzii (strain DSM 13941 / HLO8)</name>
    <dbReference type="NCBI Taxonomy" id="383372"/>
    <lineage>
        <taxon>Bacteria</taxon>
        <taxon>Bacillati</taxon>
        <taxon>Chloroflexota</taxon>
        <taxon>Chloroflexia</taxon>
        <taxon>Chloroflexales</taxon>
        <taxon>Roseiflexineae</taxon>
        <taxon>Roseiflexaceae</taxon>
        <taxon>Roseiflexus</taxon>
    </lineage>
</organism>